<feature type="chain" id="PRO_0000347301" description="Unknown protein 14">
    <location>
        <begin position="1" status="less than"/>
        <end position="14" status="greater than"/>
    </location>
</feature>
<feature type="non-terminal residue" evidence="1">
    <location>
        <position position="1"/>
    </location>
</feature>
<feature type="non-terminal residue" evidence="1">
    <location>
        <position position="14"/>
    </location>
</feature>
<accession>P85919</accession>
<evidence type="ECO:0000303" key="1">
    <source>
    </source>
</evidence>
<proteinExistence type="evidence at protein level"/>
<organism>
    <name type="scientific">Pseudotsuga menziesii</name>
    <name type="common">Douglas-fir</name>
    <name type="synonym">Abies menziesii</name>
    <dbReference type="NCBI Taxonomy" id="3357"/>
    <lineage>
        <taxon>Eukaryota</taxon>
        <taxon>Viridiplantae</taxon>
        <taxon>Streptophyta</taxon>
        <taxon>Embryophyta</taxon>
        <taxon>Tracheophyta</taxon>
        <taxon>Spermatophyta</taxon>
        <taxon>Pinopsida</taxon>
        <taxon>Pinidae</taxon>
        <taxon>Conifers I</taxon>
        <taxon>Pinales</taxon>
        <taxon>Pinaceae</taxon>
        <taxon>Pseudotsuga</taxon>
    </lineage>
</organism>
<reference key="1">
    <citation type="journal article" date="2008" name="J. Proteomics">
        <title>A proteomics approach to identify proteins differentially expressed in Douglas-fir seedlings infected by Phellinus sulphurascens.</title>
        <authorList>
            <person name="Islam M.A."/>
            <person name="Sturrock R.N."/>
            <person name="Ekramoddoullah A.K.M."/>
        </authorList>
    </citation>
    <scope>IDENTIFICATION BY MASS SPECTROMETRY</scope>
</reference>
<sequence length="14" mass="1315">RIISSVAVAVAGTA</sequence>
<protein>
    <recommendedName>
        <fullName>Unknown protein 14</fullName>
    </recommendedName>
</protein>
<name>UP14_PSEMZ</name>